<evidence type="ECO:0000255" key="1">
    <source>
        <dbReference type="PROSITE-ProRule" id="PRU00238"/>
    </source>
</evidence>
<protein>
    <recommendedName>
        <fullName>Hemoglobin subunit alpha-1</fullName>
    </recommendedName>
    <alternativeName>
        <fullName>Alpha-1-globin</fullName>
    </alternativeName>
    <alternativeName>
        <fullName>Hemoglobin alpha-1 chain</fullName>
    </alternativeName>
</protein>
<name>HBA1_BOSMU</name>
<proteinExistence type="evidence at protein level"/>
<organism>
    <name type="scientific">Bos mutus grunniens</name>
    <name type="common">Wild yak</name>
    <name type="synonym">Bos grunniens</name>
    <dbReference type="NCBI Taxonomy" id="30521"/>
    <lineage>
        <taxon>Eukaryota</taxon>
        <taxon>Metazoa</taxon>
        <taxon>Chordata</taxon>
        <taxon>Craniata</taxon>
        <taxon>Vertebrata</taxon>
        <taxon>Euteleostomi</taxon>
        <taxon>Mammalia</taxon>
        <taxon>Eutheria</taxon>
        <taxon>Laurasiatheria</taxon>
        <taxon>Artiodactyla</taxon>
        <taxon>Ruminantia</taxon>
        <taxon>Pecora</taxon>
        <taxon>Bovidae</taxon>
        <taxon>Bovinae</taxon>
        <taxon>Bos</taxon>
    </lineage>
</organism>
<feature type="chain" id="PRO_0000052566" description="Hemoglobin subunit alpha-1">
    <location>
        <begin position="1"/>
        <end position="141"/>
    </location>
</feature>
<feature type="domain" description="Globin" evidence="1">
    <location>
        <begin position="1"/>
        <end position="141"/>
    </location>
</feature>
<feature type="binding site" evidence="1">
    <location>
        <position position="58"/>
    </location>
    <ligand>
        <name>O2</name>
        <dbReference type="ChEBI" id="CHEBI:15379"/>
    </ligand>
</feature>
<feature type="binding site" description="proximal binding residue" evidence="1">
    <location>
        <position position="87"/>
    </location>
    <ligand>
        <name>heme b</name>
        <dbReference type="ChEBI" id="CHEBI:60344"/>
    </ligand>
    <ligandPart>
        <name>Fe</name>
        <dbReference type="ChEBI" id="CHEBI:18248"/>
    </ligandPart>
</feature>
<dbReference type="PIR" id="A02290">
    <property type="entry name" value="HAYA1"/>
</dbReference>
<dbReference type="SMR" id="P01967"/>
<dbReference type="Proteomes" id="UP000694520">
    <property type="component" value="Unplaced"/>
</dbReference>
<dbReference type="GO" id="GO:0072562">
    <property type="term" value="C:blood microparticle"/>
    <property type="evidence" value="ECO:0007669"/>
    <property type="project" value="TreeGrafter"/>
</dbReference>
<dbReference type="GO" id="GO:0031838">
    <property type="term" value="C:haptoglobin-hemoglobin complex"/>
    <property type="evidence" value="ECO:0007669"/>
    <property type="project" value="TreeGrafter"/>
</dbReference>
<dbReference type="GO" id="GO:0005833">
    <property type="term" value="C:hemoglobin complex"/>
    <property type="evidence" value="ECO:0007669"/>
    <property type="project" value="InterPro"/>
</dbReference>
<dbReference type="GO" id="GO:0031720">
    <property type="term" value="F:haptoglobin binding"/>
    <property type="evidence" value="ECO:0007669"/>
    <property type="project" value="TreeGrafter"/>
</dbReference>
<dbReference type="GO" id="GO:0020037">
    <property type="term" value="F:heme binding"/>
    <property type="evidence" value="ECO:0007669"/>
    <property type="project" value="InterPro"/>
</dbReference>
<dbReference type="GO" id="GO:0005506">
    <property type="term" value="F:iron ion binding"/>
    <property type="evidence" value="ECO:0007669"/>
    <property type="project" value="InterPro"/>
</dbReference>
<dbReference type="GO" id="GO:0043177">
    <property type="term" value="F:organic acid binding"/>
    <property type="evidence" value="ECO:0007669"/>
    <property type="project" value="TreeGrafter"/>
</dbReference>
<dbReference type="GO" id="GO:0019825">
    <property type="term" value="F:oxygen binding"/>
    <property type="evidence" value="ECO:0007669"/>
    <property type="project" value="InterPro"/>
</dbReference>
<dbReference type="GO" id="GO:0005344">
    <property type="term" value="F:oxygen carrier activity"/>
    <property type="evidence" value="ECO:0007669"/>
    <property type="project" value="UniProtKB-KW"/>
</dbReference>
<dbReference type="GO" id="GO:0004601">
    <property type="term" value="F:peroxidase activity"/>
    <property type="evidence" value="ECO:0007669"/>
    <property type="project" value="TreeGrafter"/>
</dbReference>
<dbReference type="GO" id="GO:0042744">
    <property type="term" value="P:hydrogen peroxide catabolic process"/>
    <property type="evidence" value="ECO:0007669"/>
    <property type="project" value="TreeGrafter"/>
</dbReference>
<dbReference type="CDD" id="cd08927">
    <property type="entry name" value="Hb-alpha-like"/>
    <property type="match status" value="1"/>
</dbReference>
<dbReference type="FunFam" id="1.10.490.10:FF:000002">
    <property type="entry name" value="Hemoglobin subunit alpha"/>
    <property type="match status" value="1"/>
</dbReference>
<dbReference type="Gene3D" id="1.10.490.10">
    <property type="entry name" value="Globins"/>
    <property type="match status" value="1"/>
</dbReference>
<dbReference type="InterPro" id="IPR000971">
    <property type="entry name" value="Globin"/>
</dbReference>
<dbReference type="InterPro" id="IPR009050">
    <property type="entry name" value="Globin-like_sf"/>
</dbReference>
<dbReference type="InterPro" id="IPR012292">
    <property type="entry name" value="Globin/Proto"/>
</dbReference>
<dbReference type="InterPro" id="IPR002338">
    <property type="entry name" value="Hemoglobin_a-typ"/>
</dbReference>
<dbReference type="InterPro" id="IPR050056">
    <property type="entry name" value="Hemoglobin_oxygen_transport"/>
</dbReference>
<dbReference type="InterPro" id="IPR002339">
    <property type="entry name" value="Hemoglobin_pi"/>
</dbReference>
<dbReference type="PANTHER" id="PTHR11442">
    <property type="entry name" value="HEMOGLOBIN FAMILY MEMBER"/>
    <property type="match status" value="1"/>
</dbReference>
<dbReference type="PANTHER" id="PTHR11442:SF48">
    <property type="entry name" value="HEMOGLOBIN SUBUNIT ALPHA"/>
    <property type="match status" value="1"/>
</dbReference>
<dbReference type="Pfam" id="PF00042">
    <property type="entry name" value="Globin"/>
    <property type="match status" value="1"/>
</dbReference>
<dbReference type="PRINTS" id="PR00612">
    <property type="entry name" value="ALPHAHAEM"/>
</dbReference>
<dbReference type="PRINTS" id="PR00815">
    <property type="entry name" value="PIHAEM"/>
</dbReference>
<dbReference type="SUPFAM" id="SSF46458">
    <property type="entry name" value="Globin-like"/>
    <property type="match status" value="1"/>
</dbReference>
<dbReference type="PROSITE" id="PS01033">
    <property type="entry name" value="GLOBIN"/>
    <property type="match status" value="1"/>
</dbReference>
<sequence>VLSAADKGNVKAAWGKVGGHAAEYGAEALERMFLSFPTTKTYFPHFDLSQGSAQVKGHGAKVAAALTKAVEHLDDLPGALSELSDLHAHKLRVDPVNFKLLSHSLLVTLASHLPSDFTPAVHASLDKFLANVSTVLTSKYR</sequence>
<keyword id="KW-0903">Direct protein sequencing</keyword>
<keyword id="KW-0349">Heme</keyword>
<keyword id="KW-0408">Iron</keyword>
<keyword id="KW-0479">Metal-binding</keyword>
<keyword id="KW-0561">Oxygen transport</keyword>
<keyword id="KW-1185">Reference proteome</keyword>
<keyword id="KW-0813">Transport</keyword>
<accession>P01967</accession>
<reference key="1">
    <citation type="journal article" date="1985" name="Biol. Chem. Hoppe-Seyler">
        <title>Studies on yak hemoglobin (Bos grunniens, Bovidae): structural basis for high intrinsic oxygen affinity?</title>
        <authorList>
            <person name="Lalthantluanga R."/>
            <person name="Wiesner H."/>
            <person name="Braunitzer G."/>
        </authorList>
    </citation>
    <scope>PROTEIN SEQUENCE</scope>
</reference>
<comment type="function">
    <text>Involved in oxygen transport from the lung to the various peripheral tissues.</text>
</comment>
<comment type="subunit">
    <text>Heterotetramer of two alpha chains and two beta chains.</text>
</comment>
<comment type="tissue specificity">
    <text>Red blood cells.</text>
</comment>
<comment type="similarity">
    <text evidence="1">Belongs to the globin family.</text>
</comment>